<reference key="1">
    <citation type="submission" date="2006-02" db="EMBL/GenBank/DDBJ databases">
        <title>Complete sequence of chromosome of Jannaschia sp. CCS1.</title>
        <authorList>
            <consortium name="US DOE Joint Genome Institute"/>
            <person name="Copeland A."/>
            <person name="Lucas S."/>
            <person name="Lapidus A."/>
            <person name="Barry K."/>
            <person name="Detter J.C."/>
            <person name="Glavina del Rio T."/>
            <person name="Hammon N."/>
            <person name="Israni S."/>
            <person name="Pitluck S."/>
            <person name="Brettin T."/>
            <person name="Bruce D."/>
            <person name="Han C."/>
            <person name="Tapia R."/>
            <person name="Gilna P."/>
            <person name="Chertkov O."/>
            <person name="Saunders E."/>
            <person name="Schmutz J."/>
            <person name="Larimer F."/>
            <person name="Land M."/>
            <person name="Kyrpides N."/>
            <person name="Lykidis A."/>
            <person name="Moran M.A."/>
            <person name="Belas R."/>
            <person name="Ye W."/>
            <person name="Buchan A."/>
            <person name="Gonzalez J.M."/>
            <person name="Schell M.A."/>
            <person name="Richardson P."/>
        </authorList>
    </citation>
    <scope>NUCLEOTIDE SEQUENCE [LARGE SCALE GENOMIC DNA]</scope>
    <source>
        <strain>CCS1</strain>
    </source>
</reference>
<gene>
    <name evidence="1" type="primary">ilvC</name>
    <name type="ordered locus">Jann_1238</name>
</gene>
<feature type="chain" id="PRO_0000252764" description="Ketol-acid reductoisomerase (NADP(+))">
    <location>
        <begin position="1"/>
        <end position="340"/>
    </location>
</feature>
<feature type="domain" description="KARI N-terminal Rossmann" evidence="2">
    <location>
        <begin position="1"/>
        <end position="182"/>
    </location>
</feature>
<feature type="domain" description="KARI C-terminal knotted" evidence="3">
    <location>
        <begin position="183"/>
        <end position="329"/>
    </location>
</feature>
<feature type="active site" evidence="1">
    <location>
        <position position="108"/>
    </location>
</feature>
<feature type="binding site" evidence="1">
    <location>
        <begin position="24"/>
        <end position="27"/>
    </location>
    <ligand>
        <name>NADP(+)</name>
        <dbReference type="ChEBI" id="CHEBI:58349"/>
    </ligand>
</feature>
<feature type="binding site" evidence="1">
    <location>
        <position position="48"/>
    </location>
    <ligand>
        <name>NADP(+)</name>
        <dbReference type="ChEBI" id="CHEBI:58349"/>
    </ligand>
</feature>
<feature type="binding site" evidence="1">
    <location>
        <position position="51"/>
    </location>
    <ligand>
        <name>NADP(+)</name>
        <dbReference type="ChEBI" id="CHEBI:58349"/>
    </ligand>
</feature>
<feature type="binding site" evidence="1">
    <location>
        <position position="53"/>
    </location>
    <ligand>
        <name>NADP(+)</name>
        <dbReference type="ChEBI" id="CHEBI:58349"/>
    </ligand>
</feature>
<feature type="binding site" evidence="1">
    <location>
        <begin position="83"/>
        <end position="86"/>
    </location>
    <ligand>
        <name>NADP(+)</name>
        <dbReference type="ChEBI" id="CHEBI:58349"/>
    </ligand>
</feature>
<feature type="binding site" evidence="1">
    <location>
        <position position="134"/>
    </location>
    <ligand>
        <name>NADP(+)</name>
        <dbReference type="ChEBI" id="CHEBI:58349"/>
    </ligand>
</feature>
<feature type="binding site" evidence="1">
    <location>
        <position position="191"/>
    </location>
    <ligand>
        <name>Mg(2+)</name>
        <dbReference type="ChEBI" id="CHEBI:18420"/>
        <label>1</label>
    </ligand>
</feature>
<feature type="binding site" evidence="1">
    <location>
        <position position="191"/>
    </location>
    <ligand>
        <name>Mg(2+)</name>
        <dbReference type="ChEBI" id="CHEBI:18420"/>
        <label>2</label>
    </ligand>
</feature>
<feature type="binding site" evidence="1">
    <location>
        <position position="195"/>
    </location>
    <ligand>
        <name>Mg(2+)</name>
        <dbReference type="ChEBI" id="CHEBI:18420"/>
        <label>1</label>
    </ligand>
</feature>
<feature type="binding site" evidence="1">
    <location>
        <position position="227"/>
    </location>
    <ligand>
        <name>Mg(2+)</name>
        <dbReference type="ChEBI" id="CHEBI:18420"/>
        <label>2</label>
    </ligand>
</feature>
<feature type="binding site" evidence="1">
    <location>
        <position position="231"/>
    </location>
    <ligand>
        <name>Mg(2+)</name>
        <dbReference type="ChEBI" id="CHEBI:18420"/>
        <label>2</label>
    </ligand>
</feature>
<feature type="binding site" evidence="1">
    <location>
        <position position="252"/>
    </location>
    <ligand>
        <name>substrate</name>
    </ligand>
</feature>
<protein>
    <recommendedName>
        <fullName evidence="1">Ketol-acid reductoisomerase (NADP(+))</fullName>
        <shortName evidence="1">KARI</shortName>
        <ecNumber evidence="1">1.1.1.86</ecNumber>
    </recommendedName>
    <alternativeName>
        <fullName evidence="1">Acetohydroxy-acid isomeroreductase</fullName>
        <shortName evidence="1">AHIR</shortName>
    </alternativeName>
    <alternativeName>
        <fullName evidence="1">Alpha-keto-beta-hydroxylacyl reductoisomerase</fullName>
    </alternativeName>
    <alternativeName>
        <fullName evidence="1">Ketol-acid reductoisomerase type 1</fullName>
    </alternativeName>
    <alternativeName>
        <fullName evidence="1">Ketol-acid reductoisomerase type I</fullName>
    </alternativeName>
</protein>
<keyword id="KW-0028">Amino-acid biosynthesis</keyword>
<keyword id="KW-0100">Branched-chain amino acid biosynthesis</keyword>
<keyword id="KW-0460">Magnesium</keyword>
<keyword id="KW-0479">Metal-binding</keyword>
<keyword id="KW-0521">NADP</keyword>
<keyword id="KW-0560">Oxidoreductase</keyword>
<keyword id="KW-1185">Reference proteome</keyword>
<dbReference type="EC" id="1.1.1.86" evidence="1"/>
<dbReference type="EMBL" id="CP000264">
    <property type="protein sequence ID" value="ABD54155.1"/>
    <property type="molecule type" value="Genomic_DNA"/>
</dbReference>
<dbReference type="RefSeq" id="WP_011454362.1">
    <property type="nucleotide sequence ID" value="NC_007802.1"/>
</dbReference>
<dbReference type="SMR" id="Q28T07"/>
<dbReference type="STRING" id="290400.Jann_1238"/>
<dbReference type="KEGG" id="jan:Jann_1238"/>
<dbReference type="eggNOG" id="COG0059">
    <property type="taxonomic scope" value="Bacteria"/>
</dbReference>
<dbReference type="HOGENOM" id="CLU_033821_0_1_5"/>
<dbReference type="OrthoDB" id="9804088at2"/>
<dbReference type="UniPathway" id="UPA00047">
    <property type="reaction ID" value="UER00056"/>
</dbReference>
<dbReference type="UniPathway" id="UPA00049">
    <property type="reaction ID" value="UER00060"/>
</dbReference>
<dbReference type="Proteomes" id="UP000008326">
    <property type="component" value="Chromosome"/>
</dbReference>
<dbReference type="GO" id="GO:0005829">
    <property type="term" value="C:cytosol"/>
    <property type="evidence" value="ECO:0007669"/>
    <property type="project" value="TreeGrafter"/>
</dbReference>
<dbReference type="GO" id="GO:0004455">
    <property type="term" value="F:ketol-acid reductoisomerase activity"/>
    <property type="evidence" value="ECO:0007669"/>
    <property type="project" value="UniProtKB-UniRule"/>
</dbReference>
<dbReference type="GO" id="GO:0000287">
    <property type="term" value="F:magnesium ion binding"/>
    <property type="evidence" value="ECO:0007669"/>
    <property type="project" value="UniProtKB-UniRule"/>
</dbReference>
<dbReference type="GO" id="GO:0050661">
    <property type="term" value="F:NADP binding"/>
    <property type="evidence" value="ECO:0007669"/>
    <property type="project" value="InterPro"/>
</dbReference>
<dbReference type="GO" id="GO:0009097">
    <property type="term" value="P:isoleucine biosynthetic process"/>
    <property type="evidence" value="ECO:0007669"/>
    <property type="project" value="UniProtKB-UniRule"/>
</dbReference>
<dbReference type="GO" id="GO:0009099">
    <property type="term" value="P:L-valine biosynthetic process"/>
    <property type="evidence" value="ECO:0007669"/>
    <property type="project" value="UniProtKB-UniRule"/>
</dbReference>
<dbReference type="FunFam" id="3.40.50.720:FF:000023">
    <property type="entry name" value="Ketol-acid reductoisomerase (NADP(+))"/>
    <property type="match status" value="1"/>
</dbReference>
<dbReference type="Gene3D" id="6.10.240.10">
    <property type="match status" value="1"/>
</dbReference>
<dbReference type="Gene3D" id="3.40.50.720">
    <property type="entry name" value="NAD(P)-binding Rossmann-like Domain"/>
    <property type="match status" value="1"/>
</dbReference>
<dbReference type="HAMAP" id="MF_00435">
    <property type="entry name" value="IlvC"/>
    <property type="match status" value="1"/>
</dbReference>
<dbReference type="InterPro" id="IPR008927">
    <property type="entry name" value="6-PGluconate_DH-like_C_sf"/>
</dbReference>
<dbReference type="InterPro" id="IPR013023">
    <property type="entry name" value="KARI"/>
</dbReference>
<dbReference type="InterPro" id="IPR000506">
    <property type="entry name" value="KARI_C"/>
</dbReference>
<dbReference type="InterPro" id="IPR013116">
    <property type="entry name" value="KARI_N"/>
</dbReference>
<dbReference type="InterPro" id="IPR014359">
    <property type="entry name" value="KARI_prok"/>
</dbReference>
<dbReference type="InterPro" id="IPR036291">
    <property type="entry name" value="NAD(P)-bd_dom_sf"/>
</dbReference>
<dbReference type="NCBIfam" id="TIGR00465">
    <property type="entry name" value="ilvC"/>
    <property type="match status" value="1"/>
</dbReference>
<dbReference type="NCBIfam" id="NF004017">
    <property type="entry name" value="PRK05479.1"/>
    <property type="match status" value="1"/>
</dbReference>
<dbReference type="NCBIfam" id="NF009940">
    <property type="entry name" value="PRK13403.1"/>
    <property type="match status" value="1"/>
</dbReference>
<dbReference type="PANTHER" id="PTHR21371">
    <property type="entry name" value="KETOL-ACID REDUCTOISOMERASE, MITOCHONDRIAL"/>
    <property type="match status" value="1"/>
</dbReference>
<dbReference type="PANTHER" id="PTHR21371:SF1">
    <property type="entry name" value="KETOL-ACID REDUCTOISOMERASE, MITOCHONDRIAL"/>
    <property type="match status" value="1"/>
</dbReference>
<dbReference type="Pfam" id="PF01450">
    <property type="entry name" value="KARI_C"/>
    <property type="match status" value="1"/>
</dbReference>
<dbReference type="Pfam" id="PF07991">
    <property type="entry name" value="KARI_N"/>
    <property type="match status" value="1"/>
</dbReference>
<dbReference type="PIRSF" id="PIRSF000116">
    <property type="entry name" value="IlvC_gammaproteo"/>
    <property type="match status" value="1"/>
</dbReference>
<dbReference type="SUPFAM" id="SSF48179">
    <property type="entry name" value="6-phosphogluconate dehydrogenase C-terminal domain-like"/>
    <property type="match status" value="1"/>
</dbReference>
<dbReference type="SUPFAM" id="SSF51735">
    <property type="entry name" value="NAD(P)-binding Rossmann-fold domains"/>
    <property type="match status" value="1"/>
</dbReference>
<dbReference type="PROSITE" id="PS51851">
    <property type="entry name" value="KARI_C"/>
    <property type="match status" value="1"/>
</dbReference>
<dbReference type="PROSITE" id="PS51850">
    <property type="entry name" value="KARI_N"/>
    <property type="match status" value="1"/>
</dbReference>
<accession>Q28T07</accession>
<name>ILVC_JANSC</name>
<proteinExistence type="inferred from homology"/>
<comment type="function">
    <text evidence="1">Involved in the biosynthesis of branched-chain amino acids (BCAA). Catalyzes an alkyl-migration followed by a ketol-acid reduction of (S)-2-acetolactate (S2AL) to yield (R)-2,3-dihydroxy-isovalerate. In the isomerase reaction, S2AL is rearranged via a Mg-dependent methyl migration to produce 3-hydroxy-3-methyl-2-ketobutyrate (HMKB). In the reductase reaction, this 2-ketoacid undergoes a metal-dependent reduction by NADPH to yield (R)-2,3-dihydroxy-isovalerate.</text>
</comment>
<comment type="catalytic activity">
    <reaction evidence="1">
        <text>(2R)-2,3-dihydroxy-3-methylbutanoate + NADP(+) = (2S)-2-acetolactate + NADPH + H(+)</text>
        <dbReference type="Rhea" id="RHEA:22068"/>
        <dbReference type="ChEBI" id="CHEBI:15378"/>
        <dbReference type="ChEBI" id="CHEBI:49072"/>
        <dbReference type="ChEBI" id="CHEBI:57783"/>
        <dbReference type="ChEBI" id="CHEBI:58349"/>
        <dbReference type="ChEBI" id="CHEBI:58476"/>
        <dbReference type="EC" id="1.1.1.86"/>
    </reaction>
</comment>
<comment type="catalytic activity">
    <reaction evidence="1">
        <text>(2R,3R)-2,3-dihydroxy-3-methylpentanoate + NADP(+) = (S)-2-ethyl-2-hydroxy-3-oxobutanoate + NADPH + H(+)</text>
        <dbReference type="Rhea" id="RHEA:13493"/>
        <dbReference type="ChEBI" id="CHEBI:15378"/>
        <dbReference type="ChEBI" id="CHEBI:49256"/>
        <dbReference type="ChEBI" id="CHEBI:49258"/>
        <dbReference type="ChEBI" id="CHEBI:57783"/>
        <dbReference type="ChEBI" id="CHEBI:58349"/>
        <dbReference type="EC" id="1.1.1.86"/>
    </reaction>
</comment>
<comment type="cofactor">
    <cofactor evidence="1">
        <name>Mg(2+)</name>
        <dbReference type="ChEBI" id="CHEBI:18420"/>
    </cofactor>
    <text evidence="1">Binds 2 magnesium ions per subunit.</text>
</comment>
<comment type="pathway">
    <text evidence="1">Amino-acid biosynthesis; L-isoleucine biosynthesis; L-isoleucine from 2-oxobutanoate: step 2/4.</text>
</comment>
<comment type="pathway">
    <text evidence="1">Amino-acid biosynthesis; L-valine biosynthesis; L-valine from pyruvate: step 2/4.</text>
</comment>
<comment type="similarity">
    <text evidence="1">Belongs to the ketol-acid reductoisomerase family.</text>
</comment>
<evidence type="ECO:0000255" key="1">
    <source>
        <dbReference type="HAMAP-Rule" id="MF_00435"/>
    </source>
</evidence>
<evidence type="ECO:0000255" key="2">
    <source>
        <dbReference type="PROSITE-ProRule" id="PRU01197"/>
    </source>
</evidence>
<evidence type="ECO:0000255" key="3">
    <source>
        <dbReference type="PROSITE-ProRule" id="PRU01198"/>
    </source>
</evidence>
<sequence length="340" mass="37201">MRVYYDRDCDVNLIKDMKVAILGYGSQGHAHALNLRDSGAKNVVVALREGSASAAKAEGEGLKVMGIAEAAAWCDVIMFTMPDELQAETYKKYVHDNLKDGAAIAFAHGLNVHFGLIEPKPGVDVIMMAPKGPGHTVRGEYTKGGGVPCLVAVHQNASDRALEIGLSYCSAIGGGRSGIIETNFREECETDLFGEQAVLCGGLVELIRMGFETLVEAGYAPEMAYFECLHEVKLIVDLIYEGGIANMNYSISNTAEYGEYVSGPRILPYDETKARMKAVLRDIQTGAFVRDFMQENQAGQPYFKGTRRLNDEHQIEQVGETLRGMMPWISEGKMVDKAKN</sequence>
<organism>
    <name type="scientific">Jannaschia sp. (strain CCS1)</name>
    <dbReference type="NCBI Taxonomy" id="290400"/>
    <lineage>
        <taxon>Bacteria</taxon>
        <taxon>Pseudomonadati</taxon>
        <taxon>Pseudomonadota</taxon>
        <taxon>Alphaproteobacteria</taxon>
        <taxon>Rhodobacterales</taxon>
        <taxon>Roseobacteraceae</taxon>
        <taxon>Jannaschia</taxon>
    </lineage>
</organism>